<keyword id="KW-0963">Cytoplasm</keyword>
<keyword id="KW-0378">Hydrolase</keyword>
<keyword id="KW-0645">Protease</keyword>
<keyword id="KW-0720">Serine protease</keyword>
<comment type="function">
    <text evidence="1">Cleaves peptides in various proteins in a process that requires ATP hydrolysis. Has a chymotrypsin-like activity. Plays a major role in the degradation of misfolded proteins.</text>
</comment>
<comment type="catalytic activity">
    <reaction evidence="1">
        <text>Hydrolysis of proteins to small peptides in the presence of ATP and magnesium. alpha-casein is the usual test substrate. In the absence of ATP, only oligopeptides shorter than five residues are hydrolyzed (such as succinyl-Leu-Tyr-|-NHMec, and Leu-Tyr-Leu-|-Tyr-Trp, in which cleavage of the -Tyr-|-Leu- and -Tyr-|-Trp bonds also occurs).</text>
        <dbReference type="EC" id="3.4.21.92"/>
    </reaction>
</comment>
<comment type="subunit">
    <text evidence="1">Fourteen ClpP subunits assemble into 2 heptameric rings which stack back to back to give a disk-like structure with a central cavity, resembling the structure of eukaryotic proteasomes.</text>
</comment>
<comment type="subcellular location">
    <subcellularLocation>
        <location evidence="1">Cytoplasm</location>
    </subcellularLocation>
</comment>
<comment type="similarity">
    <text evidence="1">Belongs to the peptidase S14 family.</text>
</comment>
<organism>
    <name type="scientific">Streptococcus agalactiae serotype III (strain NEM316)</name>
    <dbReference type="NCBI Taxonomy" id="211110"/>
    <lineage>
        <taxon>Bacteria</taxon>
        <taxon>Bacillati</taxon>
        <taxon>Bacillota</taxon>
        <taxon>Bacilli</taxon>
        <taxon>Lactobacillales</taxon>
        <taxon>Streptococcaceae</taxon>
        <taxon>Streptococcus</taxon>
    </lineage>
</organism>
<feature type="chain" id="PRO_0000179657" description="ATP-dependent Clp protease proteolytic subunit">
    <location>
        <begin position="1"/>
        <end position="196"/>
    </location>
</feature>
<feature type="active site" description="Nucleophile" evidence="1">
    <location>
        <position position="96"/>
    </location>
</feature>
<feature type="active site" evidence="1">
    <location>
        <position position="121"/>
    </location>
</feature>
<dbReference type="EC" id="3.4.21.92" evidence="1"/>
<dbReference type="EMBL" id="AL766852">
    <property type="protein sequence ID" value="CAD47293.1"/>
    <property type="molecule type" value="Genomic_DNA"/>
</dbReference>
<dbReference type="RefSeq" id="WP_000613483.1">
    <property type="nucleotide sequence ID" value="NC_004368.1"/>
</dbReference>
<dbReference type="SMR" id="Q8E3X0"/>
<dbReference type="MEROPS" id="S14.001"/>
<dbReference type="KEGG" id="san:clpP"/>
<dbReference type="eggNOG" id="COG0740">
    <property type="taxonomic scope" value="Bacteria"/>
</dbReference>
<dbReference type="HOGENOM" id="CLU_058707_3_2_9"/>
<dbReference type="Proteomes" id="UP000000823">
    <property type="component" value="Chromosome"/>
</dbReference>
<dbReference type="GO" id="GO:0005737">
    <property type="term" value="C:cytoplasm"/>
    <property type="evidence" value="ECO:0007669"/>
    <property type="project" value="UniProtKB-SubCell"/>
</dbReference>
<dbReference type="GO" id="GO:0009368">
    <property type="term" value="C:endopeptidase Clp complex"/>
    <property type="evidence" value="ECO:0007669"/>
    <property type="project" value="TreeGrafter"/>
</dbReference>
<dbReference type="GO" id="GO:0004176">
    <property type="term" value="F:ATP-dependent peptidase activity"/>
    <property type="evidence" value="ECO:0007669"/>
    <property type="project" value="InterPro"/>
</dbReference>
<dbReference type="GO" id="GO:0051117">
    <property type="term" value="F:ATPase binding"/>
    <property type="evidence" value="ECO:0007669"/>
    <property type="project" value="TreeGrafter"/>
</dbReference>
<dbReference type="GO" id="GO:0004252">
    <property type="term" value="F:serine-type endopeptidase activity"/>
    <property type="evidence" value="ECO:0007669"/>
    <property type="project" value="UniProtKB-UniRule"/>
</dbReference>
<dbReference type="GO" id="GO:0006515">
    <property type="term" value="P:protein quality control for misfolded or incompletely synthesized proteins"/>
    <property type="evidence" value="ECO:0007669"/>
    <property type="project" value="TreeGrafter"/>
</dbReference>
<dbReference type="CDD" id="cd07017">
    <property type="entry name" value="S14_ClpP_2"/>
    <property type="match status" value="1"/>
</dbReference>
<dbReference type="FunFam" id="3.90.226.10:FF:000014">
    <property type="entry name" value="ATP-dependent Clp protease proteolytic subunit"/>
    <property type="match status" value="1"/>
</dbReference>
<dbReference type="Gene3D" id="3.90.226.10">
    <property type="entry name" value="2-enoyl-CoA Hydratase, Chain A, domain 1"/>
    <property type="match status" value="1"/>
</dbReference>
<dbReference type="HAMAP" id="MF_00444">
    <property type="entry name" value="ClpP"/>
    <property type="match status" value="1"/>
</dbReference>
<dbReference type="InterPro" id="IPR001907">
    <property type="entry name" value="ClpP"/>
</dbReference>
<dbReference type="InterPro" id="IPR029045">
    <property type="entry name" value="ClpP/crotonase-like_dom_sf"/>
</dbReference>
<dbReference type="InterPro" id="IPR023562">
    <property type="entry name" value="ClpP/TepA"/>
</dbReference>
<dbReference type="InterPro" id="IPR033135">
    <property type="entry name" value="ClpP_His_AS"/>
</dbReference>
<dbReference type="InterPro" id="IPR018215">
    <property type="entry name" value="ClpP_Ser_AS"/>
</dbReference>
<dbReference type="NCBIfam" id="NF001368">
    <property type="entry name" value="PRK00277.1"/>
    <property type="match status" value="1"/>
</dbReference>
<dbReference type="NCBIfam" id="NF009205">
    <property type="entry name" value="PRK12553.1"/>
    <property type="match status" value="1"/>
</dbReference>
<dbReference type="PANTHER" id="PTHR10381">
    <property type="entry name" value="ATP-DEPENDENT CLP PROTEASE PROTEOLYTIC SUBUNIT"/>
    <property type="match status" value="1"/>
</dbReference>
<dbReference type="PANTHER" id="PTHR10381:SF70">
    <property type="entry name" value="ATP-DEPENDENT CLP PROTEASE PROTEOLYTIC SUBUNIT"/>
    <property type="match status" value="1"/>
</dbReference>
<dbReference type="Pfam" id="PF00574">
    <property type="entry name" value="CLP_protease"/>
    <property type="match status" value="1"/>
</dbReference>
<dbReference type="PRINTS" id="PR00127">
    <property type="entry name" value="CLPPROTEASEP"/>
</dbReference>
<dbReference type="SUPFAM" id="SSF52096">
    <property type="entry name" value="ClpP/crotonase"/>
    <property type="match status" value="1"/>
</dbReference>
<dbReference type="PROSITE" id="PS00382">
    <property type="entry name" value="CLP_PROTEASE_HIS"/>
    <property type="match status" value="1"/>
</dbReference>
<dbReference type="PROSITE" id="PS00381">
    <property type="entry name" value="CLP_PROTEASE_SER"/>
    <property type="match status" value="1"/>
</dbReference>
<proteinExistence type="inferred from homology"/>
<sequence length="196" mass="21551">MIPVVIEQTSRGERSYDIYSRLLKDRIIMLTGQVEDNMANSIIAQLLFLDAQDNTKDIYLYVNTPGGSVSAGLAIVDTMNFIKSDVQTIVMGMAASMGTIIASSGAKGKRFMLPNAEYMIHQPMGGTGGGTQQSDMAIAAEHLLKTRHTLEKILADNSGQSIEKVHDDAERDRWMSAQETLDYGFIDAIMENNNLQ</sequence>
<protein>
    <recommendedName>
        <fullName evidence="1">ATP-dependent Clp protease proteolytic subunit</fullName>
        <ecNumber evidence="1">3.4.21.92</ecNumber>
    </recommendedName>
    <alternativeName>
        <fullName evidence="1">Endopeptidase Clp</fullName>
    </alternativeName>
</protein>
<evidence type="ECO:0000255" key="1">
    <source>
        <dbReference type="HAMAP-Rule" id="MF_00444"/>
    </source>
</evidence>
<gene>
    <name evidence="1" type="primary">clpP</name>
    <name type="ordered locus">gbs1634</name>
</gene>
<name>CLPP_STRA3</name>
<reference key="1">
    <citation type="journal article" date="2002" name="Mol. Microbiol.">
        <title>Genome sequence of Streptococcus agalactiae, a pathogen causing invasive neonatal disease.</title>
        <authorList>
            <person name="Glaser P."/>
            <person name="Rusniok C."/>
            <person name="Buchrieser C."/>
            <person name="Chevalier F."/>
            <person name="Frangeul L."/>
            <person name="Msadek T."/>
            <person name="Zouine M."/>
            <person name="Couve E."/>
            <person name="Lalioui L."/>
            <person name="Poyart C."/>
            <person name="Trieu-Cuot P."/>
            <person name="Kunst F."/>
        </authorList>
    </citation>
    <scope>NUCLEOTIDE SEQUENCE [LARGE SCALE GENOMIC DNA]</scope>
    <source>
        <strain>NEM316</strain>
    </source>
</reference>
<accession>Q8E3X0</accession>